<keyword id="KW-0027">Amidation</keyword>
<keyword id="KW-1015">Disulfide bond</keyword>
<keyword id="KW-1213">G-protein coupled receptor impairing toxin</keyword>
<keyword id="KW-0872">Ion channel impairing toxin</keyword>
<keyword id="KW-0528">Neurotoxin</keyword>
<keyword id="KW-0632">Potassium channel impairing toxin</keyword>
<keyword id="KW-0691">RNA editing</keyword>
<keyword id="KW-0964">Secreted</keyword>
<keyword id="KW-0732">Signal</keyword>
<keyword id="KW-0800">Toxin</keyword>
<keyword id="KW-1220">Voltage-gated potassium channel impairing toxin</keyword>
<keyword id="KW-0738">Voltage-gated sodium channel impairing toxin</keyword>
<sequence length="98" mass="11247">MMKLVLFGIIVILFSMIGSIHGSDPPGNYPLNTYGNKYACTILGENDFCQKICKVHGVQYGYCFNSRCWCEYLEEKDVNIWDAVKRHCKNTILYPKGK</sequence>
<comment type="function">
    <text evidence="2">The heterodimer non-edited LVP1 induces lipolysis in rat adipocytes. Induction of lipolysis by LVP1 appears to be mediated through the beta-2 adrenergic receptor pathway (ADRB2) (By similarity).</text>
</comment>
<comment type="function">
    <text evidence="2">The edited BmKBTx-like, similar to beta-toxins, may modulate voltage-gated sodium channels (Nav) and may block voltage-gated potassium channels (Kv).</text>
</comment>
<comment type="subunit">
    <text evidence="2">Monomer (edited version) and heterodimer (non-edited version) of this alpha chain and a beta chain (AC B8XGZ8).</text>
</comment>
<comment type="subcellular location">
    <subcellularLocation>
        <location evidence="2">Secreted</location>
    </subcellularLocation>
</comment>
<comment type="tissue specificity">
    <text evidence="2">Expressed by the venom gland.</text>
</comment>
<comment type="domain">
    <text evidence="6">Has the structural arrangement of an alpha-helix connected to antiparallel beta-sheets by disulfide bonds (CS-alpha/beta).</text>
</comment>
<comment type="RNA editing">
    <location>
        <position position="81" evidence="5"/>
    </location>
    <text evidence="1">The stop codon (UGA) at position 81 is created by RNA editing.</text>
</comment>
<comment type="similarity">
    <text evidence="6">Belongs to the long (3 C-C) scorpion toxin superfamily.</text>
</comment>
<dbReference type="EMBL" id="FJ360790">
    <property type="protein sequence ID" value="ACJ23110.1"/>
    <property type="molecule type" value="mRNA"/>
</dbReference>
<dbReference type="EMBL" id="FJ360786">
    <property type="protein sequence ID" value="ACJ23106.1"/>
    <property type="molecule type" value="mRNA"/>
</dbReference>
<dbReference type="EMBL" id="FJ360788">
    <property type="protein sequence ID" value="ACJ23108.1"/>
    <property type="molecule type" value="mRNA"/>
</dbReference>
<dbReference type="EMBL" id="FJ360789">
    <property type="protein sequence ID" value="ACJ23109.1"/>
    <property type="molecule type" value="mRNA"/>
</dbReference>
<dbReference type="EMBL" id="FJ360792">
    <property type="protein sequence ID" value="ACJ23112.1"/>
    <property type="molecule type" value="mRNA"/>
</dbReference>
<dbReference type="SMR" id="B8XH01"/>
<dbReference type="GO" id="GO:0005576">
    <property type="term" value="C:extracellular region"/>
    <property type="evidence" value="ECO:0007669"/>
    <property type="project" value="UniProtKB-SubCell"/>
</dbReference>
<dbReference type="GO" id="GO:0015459">
    <property type="term" value="F:potassium channel regulator activity"/>
    <property type="evidence" value="ECO:0007669"/>
    <property type="project" value="UniProtKB-KW"/>
</dbReference>
<dbReference type="GO" id="GO:0019871">
    <property type="term" value="F:sodium channel inhibitor activity"/>
    <property type="evidence" value="ECO:0007669"/>
    <property type="project" value="InterPro"/>
</dbReference>
<dbReference type="GO" id="GO:0090729">
    <property type="term" value="F:toxin activity"/>
    <property type="evidence" value="ECO:0007669"/>
    <property type="project" value="UniProtKB-KW"/>
</dbReference>
<dbReference type="CDD" id="cd23106">
    <property type="entry name" value="neurotoxins_LC_scorpion"/>
    <property type="match status" value="1"/>
</dbReference>
<dbReference type="Gene3D" id="3.30.30.10">
    <property type="entry name" value="Knottin, scorpion toxin-like"/>
    <property type="match status" value="1"/>
</dbReference>
<dbReference type="InterPro" id="IPR044062">
    <property type="entry name" value="LCN-type_CS_alpha_beta_dom"/>
</dbReference>
<dbReference type="InterPro" id="IPR036574">
    <property type="entry name" value="Scorpion_toxin-like_sf"/>
</dbReference>
<dbReference type="InterPro" id="IPR002061">
    <property type="entry name" value="Scorpion_toxinL/defensin"/>
</dbReference>
<dbReference type="Pfam" id="PF00537">
    <property type="entry name" value="Toxin_3"/>
    <property type="match status" value="1"/>
</dbReference>
<dbReference type="SUPFAM" id="SSF57095">
    <property type="entry name" value="Scorpion toxin-like"/>
    <property type="match status" value="1"/>
</dbReference>
<dbReference type="PROSITE" id="PS51863">
    <property type="entry name" value="LCN_CSAB"/>
    <property type="match status" value="1"/>
</dbReference>
<organism>
    <name type="scientific">Buthus israelis</name>
    <name type="common">Israeli scorpion</name>
    <name type="synonym">Buthus occitanus israelis</name>
    <dbReference type="NCBI Taxonomy" id="2899555"/>
    <lineage>
        <taxon>Eukaryota</taxon>
        <taxon>Metazoa</taxon>
        <taxon>Ecdysozoa</taxon>
        <taxon>Arthropoda</taxon>
        <taxon>Chelicerata</taxon>
        <taxon>Arachnida</taxon>
        <taxon>Scorpiones</taxon>
        <taxon>Buthida</taxon>
        <taxon>Buthoidea</taxon>
        <taxon>Buthidae</taxon>
        <taxon>Buthus</taxon>
    </lineage>
</organism>
<evidence type="ECO:0000250" key="1"/>
<evidence type="ECO:0000250" key="2">
    <source>
        <dbReference type="UniProtKB" id="P84810"/>
    </source>
</evidence>
<evidence type="ECO:0000250" key="3">
    <source>
        <dbReference type="UniProtKB" id="Q6WJF5"/>
    </source>
</evidence>
<evidence type="ECO:0000255" key="4">
    <source>
        <dbReference type="PROSITE-ProRule" id="PRU01210"/>
    </source>
</evidence>
<evidence type="ECO:0000269" key="5">
    <source ref="1"/>
</evidence>
<evidence type="ECO:0000305" key="6"/>
<feature type="signal peptide" evidence="1">
    <location>
        <begin position="1"/>
        <end position="22"/>
    </location>
</feature>
<feature type="chain" id="PRO_0000394867" description="Lipolysis-activating peptide 1-alpha chain">
    <location>
        <begin position="23"/>
        <end position="96"/>
    </location>
</feature>
<feature type="chain" id="PRO_0000394868" description="Neurotoxin BmKBTx-like">
    <location>
        <begin position="23"/>
        <end position="80"/>
    </location>
</feature>
<feature type="domain" description="LCN-type CS-alpha/beta" evidence="4">
    <location>
        <begin position="26"/>
        <end position="89"/>
    </location>
</feature>
<feature type="modified residue" description="Lysine amide" evidence="3">
    <location>
        <position position="96"/>
    </location>
</feature>
<feature type="disulfide bond" evidence="4">
    <location>
        <begin position="40"/>
        <end position="63"/>
    </location>
</feature>
<feature type="disulfide bond" evidence="4">
    <location>
        <begin position="49"/>
        <end position="68"/>
    </location>
</feature>
<feature type="disulfide bond" evidence="4">
    <location>
        <begin position="53"/>
        <end position="70"/>
    </location>
</feature>
<feature type="disulfide bond" description="Interchain (with C-90 in BotLVP1 chain beta)" evidence="1">
    <location>
        <position position="88"/>
    </location>
</feature>
<feature type="sequence conflict" description="In Ref. 1; ACJ23106." evidence="6" ref="1">
    <original>M</original>
    <variation>I</variation>
    <location>
        <position position="2"/>
    </location>
</feature>
<feature type="sequence conflict" description="In Ref. 1; ACJ23112." evidence="6" ref="1">
    <original>M</original>
    <variation>T</variation>
    <location>
        <position position="2"/>
    </location>
</feature>
<feature type="sequence conflict" description="In Ref. 1; ACJ23112." evidence="6" ref="1">
    <original>L</original>
    <variation>I</variation>
    <location>
        <position position="6"/>
    </location>
</feature>
<feature type="sequence conflict" description="In Ref. 1; ACJ23106." evidence="6" ref="1">
    <original>I</original>
    <variation>V</variation>
    <location>
        <position position="10"/>
    </location>
</feature>
<feature type="sequence conflict" description="In Ref. 1; ACJ23108/ACJ23109." evidence="6" ref="1">
    <original>H</original>
    <variation>L</variation>
    <location>
        <position position="21"/>
    </location>
</feature>
<feature type="sequence conflict" description="In Ref. 1; ACJ23112." evidence="6" ref="1">
    <original>SDP</original>
    <variation>TEA</variation>
    <location>
        <begin position="23"/>
        <end position="25"/>
    </location>
</feature>
<feature type="sequence conflict" description="In Ref. 1; ACJ23109." evidence="6" ref="1">
    <original>S</original>
    <variation>Y</variation>
    <location>
        <position position="23"/>
    </location>
</feature>
<feature type="sequence conflict" description="In Ref. 1; ACJ23109." evidence="6" ref="1">
    <original>T</original>
    <variation>V</variation>
    <location>
        <position position="33"/>
    </location>
</feature>
<feature type="sequence conflict" description="In Ref. 1; ACJ23106." evidence="6" ref="1">
    <original>A</original>
    <variation>V</variation>
    <location>
        <position position="39"/>
    </location>
</feature>
<feature type="sequence conflict" description="In Ref. 1; ACJ23106/ACJ23108/ACJ23109." evidence="6" ref="1">
    <original>T</original>
    <variation>R</variation>
    <location>
        <position position="41"/>
    </location>
</feature>
<feature type="sequence conflict" description="In Ref. 1; ACJ23108." evidence="6" ref="1">
    <original>I</original>
    <variation>A</variation>
    <location>
        <position position="42"/>
    </location>
</feature>
<feature type="sequence conflict" description="In Ref. 1; ACJ23109." evidence="6" ref="1">
    <original>I</original>
    <variation>M</variation>
    <location>
        <position position="42"/>
    </location>
</feature>
<feature type="sequence conflict" description="In Ref. 1; ACJ23106/ACJ23108/ACJ23112." evidence="6" ref="1">
    <original>D</original>
    <variation>E</variation>
    <location>
        <position position="47"/>
    </location>
</feature>
<feature type="sequence conflict" description="In Ref. 1; ACJ23109." evidence="6" ref="1">
    <original>D</original>
    <variation>V</variation>
    <location>
        <position position="47"/>
    </location>
</feature>
<feature type="sequence conflict" description="In Ref. 1; ACJ23109." evidence="6" ref="1">
    <original>I</original>
    <variation>V</variation>
    <location>
        <position position="52"/>
    </location>
</feature>
<feature type="sequence conflict" description="In Ref. 1; ACJ23106." evidence="6" ref="1">
    <original>V</original>
    <variation>A</variation>
    <location>
        <position position="55"/>
    </location>
</feature>
<feature type="sequence conflict" description="In Ref. 1; ACJ23109." evidence="6" ref="1">
    <original>V</original>
    <variation>L</variation>
    <location>
        <position position="55"/>
    </location>
</feature>
<feature type="sequence conflict" description="In Ref. 1; ACJ23108/ACJ23109." evidence="6" ref="1">
    <original>VQ</original>
    <variation>GH</variation>
    <location>
        <begin position="58"/>
        <end position="59"/>
    </location>
</feature>
<feature type="sequence conflict" description="In Ref. 1; ACJ23106/ACJ23112." evidence="6" ref="1">
    <original>Q</original>
    <variation>K</variation>
    <location>
        <position position="59"/>
    </location>
</feature>
<feature type="sequence conflict" description="In Ref. 1; ACJ23106." evidence="6" ref="1">
    <original>E</original>
    <variation>K</variation>
    <location>
        <position position="74"/>
    </location>
</feature>
<feature type="sequence conflict" description="In Ref. 1; ACJ23112." evidence="6" ref="1">
    <original>E</original>
    <variation>D</variation>
    <location>
        <position position="75"/>
    </location>
</feature>
<feature type="sequence conflict" description="In Ref. 1; ACJ23108/ACJ23109." evidence="6" ref="1">
    <original>E</original>
    <variation>K</variation>
    <location>
        <position position="75"/>
    </location>
</feature>
<feature type="sequence conflict" description="In Ref. 1; ACJ23112." evidence="6" ref="1">
    <original>V</original>
    <variation>I</variation>
    <location>
        <position position="78"/>
    </location>
</feature>
<feature type="sequence conflict" description="In Ref. 1; ACJ23106/ACJ23108/ACJ23112." evidence="6" ref="1">
    <original>N</original>
    <variation>S</variation>
    <location>
        <position position="79"/>
    </location>
</feature>
<feature type="sequence conflict" description="In Ref. 1; ACJ23112." evidence="6" ref="1">
    <original>D</original>
    <variation>N</variation>
    <location>
        <position position="82"/>
    </location>
</feature>
<feature type="sequence conflict" description="In Ref. 1; ACJ23108." evidence="6" ref="1">
    <original>A</original>
    <variation>T</variation>
    <location>
        <position position="83"/>
    </location>
</feature>
<feature type="sequence conflict" description="In Ref. 1; ACJ23108/ACJ23109." evidence="6" ref="1">
    <original>R</original>
    <variation>H</variation>
    <location>
        <position position="86"/>
    </location>
</feature>
<feature type="sequence conflict" description="In Ref. 1; ACJ23112." evidence="6" ref="1">
    <original>R</original>
    <variation>N</variation>
    <location>
        <position position="86"/>
    </location>
</feature>
<feature type="sequence conflict" description="In Ref. 1; ACJ23109." evidence="6" ref="1">
    <original>H</original>
    <variation>Y</variation>
    <location>
        <position position="87"/>
    </location>
</feature>
<feature type="sequence conflict" description="In Ref. 1; ACJ23108/ACJ23109." evidence="6" ref="1">
    <original>K</original>
    <variation>N</variation>
    <location>
        <position position="89"/>
    </location>
</feature>
<feature type="sequence conflict" description="In Ref. 1; ACJ23112." evidence="6" ref="1">
    <original>K</original>
    <variation>T</variation>
    <location>
        <position position="89"/>
    </location>
</feature>
<feature type="sequence conflict" description="In Ref. 1; ACJ23109." evidence="6" ref="1">
    <original>LYPK</original>
    <variation>VYSQ</variation>
    <location>
        <begin position="93"/>
        <end position="96"/>
    </location>
</feature>
<proteinExistence type="evidence at transcript level"/>
<accession>B8XH01</accession>
<accession>B8XGZ7</accession>
<accession>B8XGZ9</accession>
<accession>B8XH00</accession>
<accession>B8XH03</accession>
<name>LV1A_BUTIS</name>
<protein>
    <recommendedName>
        <fullName>Lipolysis-activating peptide 1-alpha chain</fullName>
        <shortName>BoiLVP1-alpha</shortName>
        <shortName>LVP1-alpha</shortName>
    </recommendedName>
    <alternativeName>
        <fullName>Putative beta-like toxin Tx458</fullName>
        <shortName>BoiTx458</shortName>
    </alternativeName>
    <alternativeName>
        <fullName>Putative beta-like toxin Tx651</fullName>
        <shortName>BoiTx651</shortName>
    </alternativeName>
    <alternativeName>
        <fullName>Putative beta-like toxin Tx764</fullName>
        <shortName>BoiTx764</shortName>
    </alternativeName>
    <alternativeName>
        <fullName>Putative beta-like toxin Tx814</fullName>
        <shortName>BoiTx814</shortName>
    </alternativeName>
    <component>
        <recommendedName>
            <fullName>Neurotoxin BmKBTx-like</fullName>
        </recommendedName>
        <alternativeName>
            <fullName>Putative excitatory toxin Tx135</fullName>
            <shortName>BoiTx135</shortName>
        </alternativeName>
    </component>
</protein>
<reference key="1">
    <citation type="submission" date="2008-10" db="EMBL/GenBank/DDBJ databases">
        <title>Buthus occitanus israelis scorpion toxin.</title>
        <authorList>
            <person name="Zilberberg N."/>
            <person name="Kozminsky-Atias A."/>
        </authorList>
    </citation>
    <scope>NUCLEOTIDE SEQUENCE [MRNA]</scope>
    <scope>RNA EDITING</scope>
</reference>